<evidence type="ECO:0000250" key="1"/>
<evidence type="ECO:0000305" key="2"/>
<proteinExistence type="inferred from homology"/>
<protein>
    <recommendedName>
        <fullName>Superoxide dismutase [Fe]</fullName>
        <ecNumber>1.15.1.1</ecNumber>
    </recommendedName>
</protein>
<name>SODF_SYNE7</name>
<keyword id="KW-0408">Iron</keyword>
<keyword id="KW-0479">Metal-binding</keyword>
<keyword id="KW-0560">Oxidoreductase</keyword>
<keyword id="KW-1185">Reference proteome</keyword>
<reference key="1">
    <citation type="journal article" date="1989" name="Mol. Gen. Genet.">
        <title>Cloning and characterization of an Anacystis nidulans R2 superoxide dismutase gene.</title>
        <authorList>
            <person name="Laudenbach D.E."/>
            <person name="Trick C.G."/>
            <person name="Straus N.A."/>
        </authorList>
    </citation>
    <scope>NUCLEOTIDE SEQUENCE [GENOMIC DNA]</scope>
</reference>
<reference key="2">
    <citation type="submission" date="2005-08" db="EMBL/GenBank/DDBJ databases">
        <title>Complete sequence of chromosome 1 of Synechococcus elongatus PCC 7942.</title>
        <authorList>
            <consortium name="US DOE Joint Genome Institute"/>
            <person name="Copeland A."/>
            <person name="Lucas S."/>
            <person name="Lapidus A."/>
            <person name="Barry K."/>
            <person name="Detter J.C."/>
            <person name="Glavina T."/>
            <person name="Hammon N."/>
            <person name="Israni S."/>
            <person name="Pitluck S."/>
            <person name="Schmutz J."/>
            <person name="Larimer F."/>
            <person name="Land M."/>
            <person name="Kyrpides N."/>
            <person name="Lykidis A."/>
            <person name="Golden S."/>
            <person name="Richardson P."/>
        </authorList>
    </citation>
    <scope>NUCLEOTIDE SEQUENCE [LARGE SCALE GENOMIC DNA]</scope>
    <source>
        <strain>ATCC 33912 / PCC 7942 / FACHB-805</strain>
    </source>
</reference>
<accession>P18655</accession>
<accession>Q31Q36</accession>
<dbReference type="EC" id="1.15.1.1"/>
<dbReference type="EMBL" id="X17431">
    <property type="protein sequence ID" value="CAB57855.1"/>
    <property type="molecule type" value="Genomic_DNA"/>
</dbReference>
<dbReference type="EMBL" id="CP000100">
    <property type="protein sequence ID" value="ABB56833.1"/>
    <property type="status" value="ALT_INIT"/>
    <property type="molecule type" value="Genomic_DNA"/>
</dbReference>
<dbReference type="RefSeq" id="WP_039755809.1">
    <property type="nucleotide sequence ID" value="NZ_JACJTX010000005.1"/>
</dbReference>
<dbReference type="SMR" id="P18655"/>
<dbReference type="STRING" id="1140.Synpcc7942_0801"/>
<dbReference type="PaxDb" id="1140-Synpcc7942_0801"/>
<dbReference type="KEGG" id="syf:Synpcc7942_0801"/>
<dbReference type="eggNOG" id="COG0605">
    <property type="taxonomic scope" value="Bacteria"/>
</dbReference>
<dbReference type="HOGENOM" id="CLU_031625_0_0_3"/>
<dbReference type="OrthoDB" id="9803125at2"/>
<dbReference type="BioCyc" id="SYNEL:SYNPCC7942_0801-MONOMER"/>
<dbReference type="Proteomes" id="UP000889800">
    <property type="component" value="Chromosome"/>
</dbReference>
<dbReference type="GO" id="GO:0046872">
    <property type="term" value="F:metal ion binding"/>
    <property type="evidence" value="ECO:0007669"/>
    <property type="project" value="UniProtKB-KW"/>
</dbReference>
<dbReference type="GO" id="GO:0004784">
    <property type="term" value="F:superoxide dismutase activity"/>
    <property type="evidence" value="ECO:0007669"/>
    <property type="project" value="UniProtKB-EC"/>
</dbReference>
<dbReference type="FunFam" id="1.10.287.990:FF:000002">
    <property type="entry name" value="Superoxide dismutase"/>
    <property type="match status" value="1"/>
</dbReference>
<dbReference type="FunFam" id="3.55.40.20:FF:000001">
    <property type="entry name" value="Superoxide dismutase"/>
    <property type="match status" value="1"/>
</dbReference>
<dbReference type="Gene3D" id="1.10.287.990">
    <property type="entry name" value="Fe,Mn superoxide dismutase (SOD) domain"/>
    <property type="match status" value="1"/>
</dbReference>
<dbReference type="Gene3D" id="3.55.40.20">
    <property type="entry name" value="Iron/manganese superoxide dismutase, C-terminal domain"/>
    <property type="match status" value="1"/>
</dbReference>
<dbReference type="InterPro" id="IPR001189">
    <property type="entry name" value="Mn/Fe_SOD"/>
</dbReference>
<dbReference type="InterPro" id="IPR019833">
    <property type="entry name" value="Mn/Fe_SOD_BS"/>
</dbReference>
<dbReference type="InterPro" id="IPR019832">
    <property type="entry name" value="Mn/Fe_SOD_C"/>
</dbReference>
<dbReference type="InterPro" id="IPR019831">
    <property type="entry name" value="Mn/Fe_SOD_N"/>
</dbReference>
<dbReference type="InterPro" id="IPR036324">
    <property type="entry name" value="Mn/Fe_SOD_N_sf"/>
</dbReference>
<dbReference type="InterPro" id="IPR036314">
    <property type="entry name" value="SOD_C_sf"/>
</dbReference>
<dbReference type="PANTHER" id="PTHR42769">
    <property type="entry name" value="SUPEROXIDE DISMUTASE"/>
    <property type="match status" value="1"/>
</dbReference>
<dbReference type="PANTHER" id="PTHR42769:SF3">
    <property type="entry name" value="SUPEROXIDE DISMUTASE [FE] 2, CHLOROPLASTIC"/>
    <property type="match status" value="1"/>
</dbReference>
<dbReference type="Pfam" id="PF02777">
    <property type="entry name" value="Sod_Fe_C"/>
    <property type="match status" value="1"/>
</dbReference>
<dbReference type="Pfam" id="PF00081">
    <property type="entry name" value="Sod_Fe_N"/>
    <property type="match status" value="1"/>
</dbReference>
<dbReference type="PIRSF" id="PIRSF000349">
    <property type="entry name" value="SODismutase"/>
    <property type="match status" value="1"/>
</dbReference>
<dbReference type="PRINTS" id="PR01703">
    <property type="entry name" value="MNSODISMTASE"/>
</dbReference>
<dbReference type="SUPFAM" id="SSF54719">
    <property type="entry name" value="Fe,Mn superoxide dismutase (SOD), C-terminal domain"/>
    <property type="match status" value="1"/>
</dbReference>
<dbReference type="SUPFAM" id="SSF46609">
    <property type="entry name" value="Fe,Mn superoxide dismutase (SOD), N-terminal domain"/>
    <property type="match status" value="1"/>
</dbReference>
<dbReference type="PROSITE" id="PS00088">
    <property type="entry name" value="SOD_MN"/>
    <property type="match status" value="1"/>
</dbReference>
<gene>
    <name type="primary">sodB</name>
    <name type="ordered locus">Synpcc7942_0801</name>
</gene>
<organism>
    <name type="scientific">Synechococcus elongatus (strain ATCC 33912 / PCC 7942 / FACHB-805)</name>
    <name type="common">Anacystis nidulans R2</name>
    <dbReference type="NCBI Taxonomy" id="1140"/>
    <lineage>
        <taxon>Bacteria</taxon>
        <taxon>Bacillati</taxon>
        <taxon>Cyanobacteriota</taxon>
        <taxon>Cyanophyceae</taxon>
        <taxon>Synechococcales</taxon>
        <taxon>Synechococcaceae</taxon>
        <taxon>Synechococcus</taxon>
    </lineage>
</organism>
<comment type="function">
    <text>Destroys superoxide anion radicals which are normally produced within the cells and which are toxic to biological systems.</text>
</comment>
<comment type="catalytic activity">
    <reaction>
        <text>2 superoxide + 2 H(+) = H2O2 + O2</text>
        <dbReference type="Rhea" id="RHEA:20696"/>
        <dbReference type="ChEBI" id="CHEBI:15378"/>
        <dbReference type="ChEBI" id="CHEBI:15379"/>
        <dbReference type="ChEBI" id="CHEBI:16240"/>
        <dbReference type="ChEBI" id="CHEBI:18421"/>
        <dbReference type="EC" id="1.15.1.1"/>
    </reaction>
</comment>
<comment type="cofactor">
    <cofactor evidence="1">
        <name>Fe cation</name>
        <dbReference type="ChEBI" id="CHEBI:24875"/>
    </cofactor>
    <text evidence="1">Binds 1 Fe cation per subunit.</text>
</comment>
<comment type="subunit">
    <text>Homodimer.</text>
</comment>
<comment type="similarity">
    <text evidence="2">Belongs to the iron/manganese superoxide dismutase family.</text>
</comment>
<comment type="sequence caution" evidence="2">
    <conflict type="erroneous initiation">
        <sequence resource="EMBL-CDS" id="ABB56833"/>
    </conflict>
</comment>
<sequence length="201" mass="22083">MSYELPALPFDYTALAPYITKETLEFHHDKHHAAYVNNYNNAVKDTDLDGQPIEAVIKAIAGDASKAGLFNNAAQAWNHSFYWNSIKPNGGGAPTGALADKIAADFGSFENFVTEFKQAAATQFGSGWAWLVLDNGTLKITKTGNADTPIAHGQTPLLTIDVWEHAYYLDYQNRRPDYISTFVEKLANWDFASANYAAAIA</sequence>
<feature type="chain" id="PRO_0000160002" description="Superoxide dismutase [Fe]">
    <location>
        <begin position="1"/>
        <end position="201"/>
    </location>
</feature>
<feature type="binding site" evidence="1">
    <location>
        <position position="27"/>
    </location>
    <ligand>
        <name>Fe cation</name>
        <dbReference type="ChEBI" id="CHEBI:24875"/>
    </ligand>
</feature>
<feature type="binding site" evidence="1">
    <location>
        <position position="79"/>
    </location>
    <ligand>
        <name>Fe cation</name>
        <dbReference type="ChEBI" id="CHEBI:24875"/>
    </ligand>
</feature>
<feature type="binding site" evidence="1">
    <location>
        <position position="161"/>
    </location>
    <ligand>
        <name>Fe cation</name>
        <dbReference type="ChEBI" id="CHEBI:24875"/>
    </ligand>
</feature>
<feature type="binding site" evidence="1">
    <location>
        <position position="165"/>
    </location>
    <ligand>
        <name>Fe cation</name>
        <dbReference type="ChEBI" id="CHEBI:24875"/>
    </ligand>
</feature>